<evidence type="ECO:0000250" key="1">
    <source>
        <dbReference type="UniProtKB" id="P11441"/>
    </source>
</evidence>
<evidence type="ECO:0000255" key="2">
    <source>
        <dbReference type="PROSITE-ProRule" id="PRU00214"/>
    </source>
</evidence>
<proteinExistence type="inferred from homology"/>
<sequence length="157" mass="17632">MQLTVKALQGRECNLQVPEDEQVSTLKQLVSEKLNVPVRQQRLLFKGKALADGKRLSDYSIGPNSKLNLVVKPLEKVLLAEGTARRLADSPPPPVWHLISKVLARHFSAADASRVLEQLQRDYERSLSRLTLDDIERLASRFLHPEGTEAMEKGLSK</sequence>
<organism>
    <name type="scientific">Oryctolagus cuniculus</name>
    <name type="common">Rabbit</name>
    <dbReference type="NCBI Taxonomy" id="9986"/>
    <lineage>
        <taxon>Eukaryota</taxon>
        <taxon>Metazoa</taxon>
        <taxon>Chordata</taxon>
        <taxon>Craniata</taxon>
        <taxon>Vertebrata</taxon>
        <taxon>Euteleostomi</taxon>
        <taxon>Mammalia</taxon>
        <taxon>Eutheria</taxon>
        <taxon>Euarchontoglires</taxon>
        <taxon>Glires</taxon>
        <taxon>Lagomorpha</taxon>
        <taxon>Leporidae</taxon>
        <taxon>Oryctolagus</taxon>
    </lineage>
</organism>
<keyword id="KW-0963">Cytoplasm</keyword>
<keyword id="KW-1017">Isopeptide bond</keyword>
<keyword id="KW-0539">Nucleus</keyword>
<keyword id="KW-0597">Phosphoprotein</keyword>
<keyword id="KW-1185">Reference proteome</keyword>
<keyword id="KW-0813">Transport</keyword>
<keyword id="KW-0832">Ubl conjugation</keyword>
<reference key="1">
    <citation type="submission" date="2008-12" db="EMBL/GenBank/DDBJ databases">
        <title>NISC comparative sequencing initiative.</title>
        <authorList>
            <person name="Antonellis A."/>
            <person name="Ayele K."/>
            <person name="Benjamin B."/>
            <person name="Blakesley R.W."/>
            <person name="Boakye A."/>
            <person name="Bouffard G.G."/>
            <person name="Brinkley C."/>
            <person name="Brooks S."/>
            <person name="Chu G."/>
            <person name="Coleman H."/>
            <person name="Engle J."/>
            <person name="Gestole M."/>
            <person name="Greene A."/>
            <person name="Guan X."/>
            <person name="Gupta J."/>
            <person name="Haghighi P."/>
            <person name="Han J."/>
            <person name="Hansen N."/>
            <person name="Ho S.-L."/>
            <person name="Hu P."/>
            <person name="Hunter G."/>
            <person name="Hurle B."/>
            <person name="Idol J.R."/>
            <person name="Kwong P."/>
            <person name="Laric P."/>
            <person name="Larson S."/>
            <person name="Lee-Lin S.-Q."/>
            <person name="Legaspi R."/>
            <person name="Madden M."/>
            <person name="Maduro Q.L."/>
            <person name="Maduro V.B."/>
            <person name="Margulies E.H."/>
            <person name="Masiello C."/>
            <person name="Maskeri B."/>
            <person name="McDowell J."/>
            <person name="Mojidi H.A."/>
            <person name="Mullikin J.C."/>
            <person name="Oestreicher J.S."/>
            <person name="Park M."/>
            <person name="Portnoy M.E."/>
            <person name="Prasad A."/>
            <person name="Puri O."/>
            <person name="Reddix-Dugue N."/>
            <person name="Schandler K."/>
            <person name="Schueler M.G."/>
            <person name="Sison C."/>
            <person name="Stantripop S."/>
            <person name="Stephen E."/>
            <person name="Taye A."/>
            <person name="Thomas J.W."/>
            <person name="Thomas P.J."/>
            <person name="Tsipouri V."/>
            <person name="Ung L."/>
            <person name="Vogt J.L."/>
            <person name="Wetherby K.D."/>
            <person name="Young A."/>
            <person name="Green E.D."/>
        </authorList>
    </citation>
    <scope>NUCLEOTIDE SEQUENCE [LARGE SCALE GENOMIC DNA]</scope>
</reference>
<dbReference type="EMBL" id="DP001061">
    <property type="protein sequence ID" value="ACK44284.1"/>
    <property type="molecule type" value="Genomic_DNA"/>
</dbReference>
<dbReference type="RefSeq" id="NP_001164852.1">
    <property type="nucleotide sequence ID" value="NM_001171381.1"/>
</dbReference>
<dbReference type="BMRB" id="B7NZQ9"/>
<dbReference type="SMR" id="B7NZQ9"/>
<dbReference type="BioGRID" id="1173367">
    <property type="interactions" value="4"/>
</dbReference>
<dbReference type="FunCoup" id="B7NZQ9">
    <property type="interactions" value="652"/>
</dbReference>
<dbReference type="STRING" id="9986.ENSOCUP00000041099"/>
<dbReference type="PaxDb" id="9986-ENSOCUP00000024993"/>
<dbReference type="Ensembl" id="ENSOCUT00000023480.3">
    <property type="protein sequence ID" value="ENSOCUP00000024993.2"/>
    <property type="gene ID" value="ENSOCUG00000022433.3"/>
</dbReference>
<dbReference type="GeneID" id="100328764"/>
<dbReference type="KEGG" id="ocu:100328764"/>
<dbReference type="CTD" id="8266"/>
<dbReference type="eggNOG" id="KOG0001">
    <property type="taxonomic scope" value="Eukaryota"/>
</dbReference>
<dbReference type="GeneTree" id="ENSGT00950000182808"/>
<dbReference type="HOGENOM" id="CLU_119809_0_0_1"/>
<dbReference type="InParanoid" id="B7NZQ9"/>
<dbReference type="OMA" id="SMDTSYM"/>
<dbReference type="OrthoDB" id="417450at2759"/>
<dbReference type="Proteomes" id="UP000001811">
    <property type="component" value="Unplaced"/>
</dbReference>
<dbReference type="Bgee" id="ENSOCUG00000022433">
    <property type="expression patterns" value="Expressed in skeletal muscle tissue and 17 other cell types or tissues"/>
</dbReference>
<dbReference type="GO" id="GO:0071818">
    <property type="term" value="C:BAT3 complex"/>
    <property type="evidence" value="ECO:0000250"/>
    <property type="project" value="UniProtKB"/>
</dbReference>
<dbReference type="GO" id="GO:0005829">
    <property type="term" value="C:cytosol"/>
    <property type="evidence" value="ECO:0000250"/>
    <property type="project" value="UniProtKB"/>
</dbReference>
<dbReference type="GO" id="GO:0005634">
    <property type="term" value="C:nucleus"/>
    <property type="evidence" value="ECO:0007669"/>
    <property type="project" value="UniProtKB-SubCell"/>
</dbReference>
<dbReference type="GO" id="GO:0051087">
    <property type="term" value="F:protein-folding chaperone binding"/>
    <property type="evidence" value="ECO:0007669"/>
    <property type="project" value="TreeGrafter"/>
</dbReference>
<dbReference type="GO" id="GO:0006620">
    <property type="term" value="P:post-translational protein targeting to endoplasmic reticulum membrane"/>
    <property type="evidence" value="ECO:0007669"/>
    <property type="project" value="InterPro"/>
</dbReference>
<dbReference type="GO" id="GO:0071816">
    <property type="term" value="P:tail-anchored membrane protein insertion into ER membrane"/>
    <property type="evidence" value="ECO:0000250"/>
    <property type="project" value="UniProtKB"/>
</dbReference>
<dbReference type="CDD" id="cd01807">
    <property type="entry name" value="Ubl_UBL4A_like"/>
    <property type="match status" value="1"/>
</dbReference>
<dbReference type="FunFam" id="3.10.20.90:FF:000144">
    <property type="entry name" value="Ubiquitin-like protein 4A"/>
    <property type="match status" value="1"/>
</dbReference>
<dbReference type="Gene3D" id="3.10.20.90">
    <property type="entry name" value="Phosphatidylinositol 3-kinase Catalytic Subunit, Chain A, domain 1"/>
    <property type="match status" value="1"/>
</dbReference>
<dbReference type="InterPro" id="IPR000626">
    <property type="entry name" value="Ubiquitin-like_dom"/>
</dbReference>
<dbReference type="InterPro" id="IPR029071">
    <property type="entry name" value="Ubiquitin-like_domsf"/>
</dbReference>
<dbReference type="InterPro" id="IPR019954">
    <property type="entry name" value="Ubiquitin_CS"/>
</dbReference>
<dbReference type="InterPro" id="IPR019956">
    <property type="entry name" value="Ubiquitin_dom"/>
</dbReference>
<dbReference type="InterPro" id="IPR041421">
    <property type="entry name" value="Ubl4_C_TUGS"/>
</dbReference>
<dbReference type="InterPro" id="IPR047154">
    <property type="entry name" value="UBL4A-like"/>
</dbReference>
<dbReference type="InterPro" id="IPR044724">
    <property type="entry name" value="Ubl_UBL4A-like"/>
</dbReference>
<dbReference type="PANTHER" id="PTHR46555">
    <property type="entry name" value="UBIQUITIN-LIKE PROTEIN 4A"/>
    <property type="match status" value="1"/>
</dbReference>
<dbReference type="PANTHER" id="PTHR46555:SF1">
    <property type="entry name" value="UBIQUITIN-LIKE PROTEIN 4A"/>
    <property type="match status" value="1"/>
</dbReference>
<dbReference type="Pfam" id="PF17840">
    <property type="entry name" value="Tugs"/>
    <property type="match status" value="1"/>
</dbReference>
<dbReference type="Pfam" id="PF00240">
    <property type="entry name" value="ubiquitin"/>
    <property type="match status" value="1"/>
</dbReference>
<dbReference type="PRINTS" id="PR00348">
    <property type="entry name" value="UBIQUITIN"/>
</dbReference>
<dbReference type="SMART" id="SM00213">
    <property type="entry name" value="UBQ"/>
    <property type="match status" value="1"/>
</dbReference>
<dbReference type="SUPFAM" id="SSF54236">
    <property type="entry name" value="Ubiquitin-like"/>
    <property type="match status" value="1"/>
</dbReference>
<dbReference type="PROSITE" id="PS00299">
    <property type="entry name" value="UBIQUITIN_1"/>
    <property type="match status" value="1"/>
</dbReference>
<dbReference type="PROSITE" id="PS50053">
    <property type="entry name" value="UBIQUITIN_2"/>
    <property type="match status" value="1"/>
</dbReference>
<gene>
    <name type="primary">UBL4A</name>
</gene>
<comment type="function">
    <text evidence="1">As part of a cytosolic protein quality control complex, the BAG6/BAT3 complex, maintains misfolded and hydrophobic patches-containing proteins in a soluble state and participates in their proper delivery to the endoplasmic reticulum or alternatively can promote their sorting to the proteasome where they undergo degradation. The BAG6/BAT3 complex is involved in the post-translational delivery of tail-anchored/type II transmembrane proteins to the endoplasmic reticulum membrane. Recruited to ribosomes, it interacts with the transmembrane region of newly synthesized tail-anchored proteins and together with SGTA and ASNA1 mediates their delivery to the endoplasmic reticulum. Client proteins that cannot be properly delivered to the endoplasmic reticulum are ubiquitinated and sorted to the proteasome. Similarly, the BAG6/BAT3 complex also functions as a sorting platform for proteins of the secretory pathway that are mislocalized to the cytosol either delivering them to the proteasome for degradation or to the endoplasmic reticulum. The BAG6/BAT3 complex also plays a role in the endoplasmic reticulum-associated degradation (ERAD), a quality control mechanism that eliminates unwanted proteins of the endoplasmic reticulum through their retrotranslocation to the cytosol and their targeting to the proteasome. It maintains these retrotranslocated proteins in an unfolded yet soluble state condition in the cytosol to ensure their proper delivery to the proteasome.</text>
</comment>
<comment type="subunit">
    <text evidence="1">Component of the BAG6/BAT3 complex, at least composed of BAG6, UBL4A and GET4/TRC35. Interacts with BAG6; the interaction is direct and required for UBL4A protein stability. Interacts with USP13; may be indirect via BAG6.</text>
</comment>
<comment type="subcellular location">
    <subcellularLocation>
        <location evidence="1">Cytoplasm</location>
        <location evidence="1">Cytosol</location>
    </subcellularLocation>
    <subcellularLocation>
        <location evidence="1">Nucleus</location>
    </subcellularLocation>
</comment>
<comment type="PTM">
    <text evidence="1">Polyubiquitinated. Ubiquitination by AMFR and deubiquitination by USP13 may regulate the interaction between the BAG6/BAT3 complex and SGTA and therefore may regulate client proteins fate.</text>
</comment>
<name>UBL4A_RABIT</name>
<protein>
    <recommendedName>
        <fullName>Ubiquitin-like protein 4A</fullName>
    </recommendedName>
</protein>
<accession>B7NZQ9</accession>
<feature type="chain" id="PRO_0000403738" description="Ubiquitin-like protein 4A">
    <location>
        <begin position="1"/>
        <end position="157"/>
    </location>
</feature>
<feature type="domain" description="Ubiquitin-like" evidence="2">
    <location>
        <begin position="1"/>
        <end position="76"/>
    </location>
</feature>
<feature type="region of interest" description="Required and sufficient for interaction with BAG6" evidence="1">
    <location>
        <begin position="96"/>
        <end position="138"/>
    </location>
</feature>
<feature type="modified residue" description="Phosphoserine" evidence="1">
    <location>
        <position position="90"/>
    </location>
</feature>
<feature type="cross-link" description="Glycyl lysine isopeptide (Lys-Gly) (interchain with G-Cter in ubiquitin)" evidence="1">
    <location>
        <position position="48"/>
    </location>
</feature>